<evidence type="ECO:0000255" key="1">
    <source>
        <dbReference type="HAMAP-Rule" id="MF_00149"/>
    </source>
</evidence>
<evidence type="ECO:0000256" key="2">
    <source>
        <dbReference type="SAM" id="MobiDB-lite"/>
    </source>
</evidence>
<organism>
    <name type="scientific">Heliobacterium modesticaldum (strain ATCC 51547 / Ice1)</name>
    <dbReference type="NCBI Taxonomy" id="498761"/>
    <lineage>
        <taxon>Bacteria</taxon>
        <taxon>Bacillati</taxon>
        <taxon>Bacillota</taxon>
        <taxon>Clostridia</taxon>
        <taxon>Eubacteriales</taxon>
        <taxon>Heliobacteriaceae</taxon>
        <taxon>Heliomicrobium</taxon>
    </lineage>
</organism>
<name>MUTL_HELMI</name>
<dbReference type="EMBL" id="CP000930">
    <property type="protein sequence ID" value="ABZ85121.1"/>
    <property type="molecule type" value="Genomic_DNA"/>
</dbReference>
<dbReference type="RefSeq" id="WP_012283613.1">
    <property type="nucleotide sequence ID" value="NC_010337.2"/>
</dbReference>
<dbReference type="SMR" id="B0TB10"/>
<dbReference type="STRING" id="498761.HM1_2583"/>
<dbReference type="KEGG" id="hmo:HM1_2583"/>
<dbReference type="eggNOG" id="COG0323">
    <property type="taxonomic scope" value="Bacteria"/>
</dbReference>
<dbReference type="HOGENOM" id="CLU_004131_4_2_9"/>
<dbReference type="OrthoDB" id="9763467at2"/>
<dbReference type="Proteomes" id="UP000008550">
    <property type="component" value="Chromosome"/>
</dbReference>
<dbReference type="GO" id="GO:0032300">
    <property type="term" value="C:mismatch repair complex"/>
    <property type="evidence" value="ECO:0007669"/>
    <property type="project" value="InterPro"/>
</dbReference>
<dbReference type="GO" id="GO:0005524">
    <property type="term" value="F:ATP binding"/>
    <property type="evidence" value="ECO:0007669"/>
    <property type="project" value="InterPro"/>
</dbReference>
<dbReference type="GO" id="GO:0016887">
    <property type="term" value="F:ATP hydrolysis activity"/>
    <property type="evidence" value="ECO:0007669"/>
    <property type="project" value="InterPro"/>
</dbReference>
<dbReference type="GO" id="GO:0140664">
    <property type="term" value="F:ATP-dependent DNA damage sensor activity"/>
    <property type="evidence" value="ECO:0007669"/>
    <property type="project" value="InterPro"/>
</dbReference>
<dbReference type="GO" id="GO:0030983">
    <property type="term" value="F:mismatched DNA binding"/>
    <property type="evidence" value="ECO:0007669"/>
    <property type="project" value="InterPro"/>
</dbReference>
<dbReference type="GO" id="GO:0006298">
    <property type="term" value="P:mismatch repair"/>
    <property type="evidence" value="ECO:0007669"/>
    <property type="project" value="UniProtKB-UniRule"/>
</dbReference>
<dbReference type="CDD" id="cd16926">
    <property type="entry name" value="HATPase_MutL-MLH-PMS-like"/>
    <property type="match status" value="1"/>
</dbReference>
<dbReference type="CDD" id="cd00782">
    <property type="entry name" value="MutL_Trans"/>
    <property type="match status" value="1"/>
</dbReference>
<dbReference type="FunFam" id="3.30.565.10:FF:000003">
    <property type="entry name" value="DNA mismatch repair endonuclease MutL"/>
    <property type="match status" value="1"/>
</dbReference>
<dbReference type="Gene3D" id="3.30.230.10">
    <property type="match status" value="1"/>
</dbReference>
<dbReference type="Gene3D" id="3.30.565.10">
    <property type="entry name" value="Histidine kinase-like ATPase, C-terminal domain"/>
    <property type="match status" value="1"/>
</dbReference>
<dbReference type="Gene3D" id="3.30.1540.20">
    <property type="entry name" value="MutL, C-terminal domain, dimerisation subdomain"/>
    <property type="match status" value="1"/>
</dbReference>
<dbReference type="Gene3D" id="3.30.1370.100">
    <property type="entry name" value="MutL, C-terminal domain, regulatory subdomain"/>
    <property type="match status" value="1"/>
</dbReference>
<dbReference type="HAMAP" id="MF_00149">
    <property type="entry name" value="DNA_mis_repair"/>
    <property type="match status" value="1"/>
</dbReference>
<dbReference type="InterPro" id="IPR014762">
    <property type="entry name" value="DNA_mismatch_repair_CS"/>
</dbReference>
<dbReference type="InterPro" id="IPR020667">
    <property type="entry name" value="DNA_mismatch_repair_MutL"/>
</dbReference>
<dbReference type="InterPro" id="IPR013507">
    <property type="entry name" value="DNA_mismatch_S5_2-like"/>
</dbReference>
<dbReference type="InterPro" id="IPR036890">
    <property type="entry name" value="HATPase_C_sf"/>
</dbReference>
<dbReference type="InterPro" id="IPR002099">
    <property type="entry name" value="MutL/Mlh/PMS"/>
</dbReference>
<dbReference type="InterPro" id="IPR038973">
    <property type="entry name" value="MutL/Mlh/Pms-like"/>
</dbReference>
<dbReference type="InterPro" id="IPR014790">
    <property type="entry name" value="MutL_C"/>
</dbReference>
<dbReference type="InterPro" id="IPR042120">
    <property type="entry name" value="MutL_C_dimsub"/>
</dbReference>
<dbReference type="InterPro" id="IPR042121">
    <property type="entry name" value="MutL_C_regsub"/>
</dbReference>
<dbReference type="InterPro" id="IPR037198">
    <property type="entry name" value="MutL_C_sf"/>
</dbReference>
<dbReference type="InterPro" id="IPR020568">
    <property type="entry name" value="Ribosomal_Su5_D2-typ_SF"/>
</dbReference>
<dbReference type="InterPro" id="IPR014721">
    <property type="entry name" value="Ribsml_uS5_D2-typ_fold_subgr"/>
</dbReference>
<dbReference type="NCBIfam" id="TIGR00585">
    <property type="entry name" value="mutl"/>
    <property type="match status" value="1"/>
</dbReference>
<dbReference type="PANTHER" id="PTHR10073">
    <property type="entry name" value="DNA MISMATCH REPAIR PROTEIN MLH, PMS, MUTL"/>
    <property type="match status" value="1"/>
</dbReference>
<dbReference type="PANTHER" id="PTHR10073:SF12">
    <property type="entry name" value="DNA MISMATCH REPAIR PROTEIN MLH1"/>
    <property type="match status" value="1"/>
</dbReference>
<dbReference type="Pfam" id="PF01119">
    <property type="entry name" value="DNA_mis_repair"/>
    <property type="match status" value="1"/>
</dbReference>
<dbReference type="Pfam" id="PF13589">
    <property type="entry name" value="HATPase_c_3"/>
    <property type="match status" value="1"/>
</dbReference>
<dbReference type="Pfam" id="PF08676">
    <property type="entry name" value="MutL_C"/>
    <property type="match status" value="1"/>
</dbReference>
<dbReference type="SMART" id="SM01340">
    <property type="entry name" value="DNA_mis_repair"/>
    <property type="match status" value="1"/>
</dbReference>
<dbReference type="SMART" id="SM00853">
    <property type="entry name" value="MutL_C"/>
    <property type="match status" value="1"/>
</dbReference>
<dbReference type="SUPFAM" id="SSF55874">
    <property type="entry name" value="ATPase domain of HSP90 chaperone/DNA topoisomerase II/histidine kinase"/>
    <property type="match status" value="1"/>
</dbReference>
<dbReference type="SUPFAM" id="SSF118116">
    <property type="entry name" value="DNA mismatch repair protein MutL"/>
    <property type="match status" value="1"/>
</dbReference>
<dbReference type="SUPFAM" id="SSF54211">
    <property type="entry name" value="Ribosomal protein S5 domain 2-like"/>
    <property type="match status" value="1"/>
</dbReference>
<dbReference type="PROSITE" id="PS00058">
    <property type="entry name" value="DNA_MISMATCH_REPAIR_1"/>
    <property type="match status" value="1"/>
</dbReference>
<protein>
    <recommendedName>
        <fullName evidence="1">DNA mismatch repair protein MutL</fullName>
    </recommendedName>
</protein>
<accession>B0TB10</accession>
<comment type="function">
    <text evidence="1">This protein is involved in the repair of mismatches in DNA. It is required for dam-dependent methyl-directed DNA mismatch repair. May act as a 'molecular matchmaker', a protein that promotes the formation of a stable complex between two or more DNA-binding proteins in an ATP-dependent manner without itself being part of a final effector complex.</text>
</comment>
<comment type="similarity">
    <text evidence="1">Belongs to the DNA mismatch repair MutL/HexB family.</text>
</comment>
<feature type="chain" id="PRO_1000096657" description="DNA mismatch repair protein MutL">
    <location>
        <begin position="1"/>
        <end position="660"/>
    </location>
</feature>
<feature type="region of interest" description="Disordered" evidence="2">
    <location>
        <begin position="341"/>
        <end position="362"/>
    </location>
</feature>
<feature type="region of interest" description="Disordered" evidence="2">
    <location>
        <begin position="378"/>
        <end position="398"/>
    </location>
</feature>
<feature type="compositionally biased region" description="Polar residues" evidence="2">
    <location>
        <begin position="341"/>
        <end position="355"/>
    </location>
</feature>
<feature type="compositionally biased region" description="Basic and acidic residues" evidence="2">
    <location>
        <begin position="385"/>
        <end position="398"/>
    </location>
</feature>
<proteinExistence type="inferred from homology"/>
<gene>
    <name evidence="1" type="primary">mutL</name>
    <name type="ordered locus">Helmi_24960</name>
    <name type="ORF">HM1_2583</name>
</gene>
<keyword id="KW-0227">DNA damage</keyword>
<keyword id="KW-0234">DNA repair</keyword>
<keyword id="KW-1185">Reference proteome</keyword>
<sequence length="660" mass="73644">MGVIQRLDTHTVNQIAAGEVVERPASIVKELLENALDAGATRIDITLAEGGKKLIRIIDNGCGMAADDAELCVERHATSKIRRAEDLMAVQTLGFRGEALPSIAAVSRLVITTRRSIDNQATRVRIDGGERYPIEAVGAPPGTTVQVEDLFFNTPARRKFLRSATAEGSACAEVIWRLAAAYPHVAFSLTQGKQISFRSPGNNKPLETLSAVFGREIISFLLPLSAVAPDGWTLRGFIGSPSLHRNNRNHQNWFVNQRWVRCRILSQAVEEAYHGMLPGGRFPFFVLHLELPPQTIDVNSHPTKQEIKFDRERDVADFTRQTVLQTLRSRPLSRPLWSLASFQSDGAPPTQQLSSDVREKAEGERWRQDRILLYREGALSPTKQELPKSPERSERVERLNSGDFGQGRALYRESSQELPTDCLRESLEETESQSESIRQCLSENLPLHRQEPRAEKECQPVEGLVAGDVAEWIPIGQFRRSYILAEGGDTLYLVDQHAAHERVLYHGLKERYLNEAGVCASQQLLLPVTVTLTPAEFQGAMEAIAELRDAGLIVEHFGGNTLLIRAVPVGLPPGEEKGFFRDILNSLMKGLRDREVIRRAALSSMACRGAVKAGQVMSHAEMGALLQQLARLEGVDTCPHGRPYLLRIDRRELERRFYRS</sequence>
<reference key="1">
    <citation type="journal article" date="2008" name="J. Bacteriol.">
        <title>The genome of Heliobacterium modesticaldum, a phototrophic representative of the Firmicutes containing the simplest photosynthetic apparatus.</title>
        <authorList>
            <person name="Sattley W.M."/>
            <person name="Madigan M.T."/>
            <person name="Swingley W.D."/>
            <person name="Cheung P.C."/>
            <person name="Clocksin K.M."/>
            <person name="Conrad A.L."/>
            <person name="Dejesa L.C."/>
            <person name="Honchak B.M."/>
            <person name="Jung D.O."/>
            <person name="Karbach L.E."/>
            <person name="Kurdoglu A."/>
            <person name="Lahiri S."/>
            <person name="Mastrian S.D."/>
            <person name="Page L.E."/>
            <person name="Taylor H.L."/>
            <person name="Wang Z.T."/>
            <person name="Raymond J."/>
            <person name="Chen M."/>
            <person name="Blankenship R.E."/>
            <person name="Touchman J.W."/>
        </authorList>
    </citation>
    <scope>NUCLEOTIDE SEQUENCE [LARGE SCALE GENOMIC DNA]</scope>
    <source>
        <strain>ATCC 51547 / Ice1</strain>
    </source>
</reference>